<protein>
    <recommendedName>
        <fullName evidence="1">Fluoride-specific ion channel FluC</fullName>
    </recommendedName>
</protein>
<sequence length="126" mass="13786">MYYPLLSIALGSVLGAWLRWFLGLKLNPIYPQIPLGTVTVNLVGGFIIGFAMAYFAHSDLNPNYKLFVITGFCGALTTFSTFSIEIVTLLQSGKWGMAMLAISIHLIGSLIFTCLGLATYYWVAGH</sequence>
<proteinExistence type="inferred from homology"/>
<organism>
    <name type="scientific">Acinetobacter baumannii (strain AB0057)</name>
    <dbReference type="NCBI Taxonomy" id="480119"/>
    <lineage>
        <taxon>Bacteria</taxon>
        <taxon>Pseudomonadati</taxon>
        <taxon>Pseudomonadota</taxon>
        <taxon>Gammaproteobacteria</taxon>
        <taxon>Moraxellales</taxon>
        <taxon>Moraxellaceae</taxon>
        <taxon>Acinetobacter</taxon>
        <taxon>Acinetobacter calcoaceticus/baumannii complex</taxon>
    </lineage>
</organism>
<comment type="function">
    <text evidence="1">Fluoride-specific ion channel. Important for reducing fluoride concentration in the cell, thus reducing its toxicity.</text>
</comment>
<comment type="catalytic activity">
    <reaction evidence="1">
        <text>fluoride(in) = fluoride(out)</text>
        <dbReference type="Rhea" id="RHEA:76159"/>
        <dbReference type="ChEBI" id="CHEBI:17051"/>
    </reaction>
    <physiologicalReaction direction="left-to-right" evidence="1">
        <dbReference type="Rhea" id="RHEA:76160"/>
    </physiologicalReaction>
</comment>
<comment type="activity regulation">
    <text evidence="1">Na(+) is not transported, but it plays an essential structural role and its presence is essential for fluoride channel function.</text>
</comment>
<comment type="subcellular location">
    <subcellularLocation>
        <location evidence="1">Cell inner membrane</location>
        <topology evidence="1">Multi-pass membrane protein</topology>
    </subcellularLocation>
</comment>
<comment type="similarity">
    <text evidence="1">Belongs to the fluoride channel Fluc/FEX (TC 1.A.43) family.</text>
</comment>
<reference key="1">
    <citation type="journal article" date="2008" name="J. Bacteriol.">
        <title>Comparative genome sequence analysis of multidrug-resistant Acinetobacter baumannii.</title>
        <authorList>
            <person name="Adams M.D."/>
            <person name="Goglin K."/>
            <person name="Molyneaux N."/>
            <person name="Hujer K.M."/>
            <person name="Lavender H."/>
            <person name="Jamison J.J."/>
            <person name="MacDonald I.J."/>
            <person name="Martin K.M."/>
            <person name="Russo T."/>
            <person name="Campagnari A.A."/>
            <person name="Hujer A.M."/>
            <person name="Bonomo R.A."/>
            <person name="Gill S.R."/>
        </authorList>
    </citation>
    <scope>NUCLEOTIDE SEQUENCE [LARGE SCALE GENOMIC DNA]</scope>
    <source>
        <strain>AB0057</strain>
    </source>
</reference>
<evidence type="ECO:0000255" key="1">
    <source>
        <dbReference type="HAMAP-Rule" id="MF_00454"/>
    </source>
</evidence>
<name>FLUC_ACIB5</name>
<gene>
    <name evidence="1" type="primary">fluC</name>
    <name evidence="1" type="synonym">crcB</name>
    <name type="ordered locus">AB57_0466</name>
</gene>
<keyword id="KW-0997">Cell inner membrane</keyword>
<keyword id="KW-1003">Cell membrane</keyword>
<keyword id="KW-0407">Ion channel</keyword>
<keyword id="KW-0406">Ion transport</keyword>
<keyword id="KW-0472">Membrane</keyword>
<keyword id="KW-0479">Metal-binding</keyword>
<keyword id="KW-0915">Sodium</keyword>
<keyword id="KW-0812">Transmembrane</keyword>
<keyword id="KW-1133">Transmembrane helix</keyword>
<keyword id="KW-0813">Transport</keyword>
<dbReference type="EMBL" id="CP001182">
    <property type="protein sequence ID" value="ACJ39889.1"/>
    <property type="molecule type" value="Genomic_DNA"/>
</dbReference>
<dbReference type="RefSeq" id="WP_000291731.1">
    <property type="nucleotide sequence ID" value="NC_011586.2"/>
</dbReference>
<dbReference type="SMR" id="B7I4B4"/>
<dbReference type="KEGG" id="abn:AB57_0466"/>
<dbReference type="HOGENOM" id="CLU_114342_3_3_6"/>
<dbReference type="Proteomes" id="UP000007094">
    <property type="component" value="Chromosome"/>
</dbReference>
<dbReference type="GO" id="GO:0005886">
    <property type="term" value="C:plasma membrane"/>
    <property type="evidence" value="ECO:0007669"/>
    <property type="project" value="UniProtKB-SubCell"/>
</dbReference>
<dbReference type="GO" id="GO:0062054">
    <property type="term" value="F:fluoride channel activity"/>
    <property type="evidence" value="ECO:0007669"/>
    <property type="project" value="UniProtKB-UniRule"/>
</dbReference>
<dbReference type="GO" id="GO:0046872">
    <property type="term" value="F:metal ion binding"/>
    <property type="evidence" value="ECO:0007669"/>
    <property type="project" value="UniProtKB-KW"/>
</dbReference>
<dbReference type="GO" id="GO:0140114">
    <property type="term" value="P:cellular detoxification of fluoride"/>
    <property type="evidence" value="ECO:0007669"/>
    <property type="project" value="UniProtKB-UniRule"/>
</dbReference>
<dbReference type="HAMAP" id="MF_00454">
    <property type="entry name" value="FluC"/>
    <property type="match status" value="1"/>
</dbReference>
<dbReference type="InterPro" id="IPR003691">
    <property type="entry name" value="FluC"/>
</dbReference>
<dbReference type="NCBIfam" id="TIGR00494">
    <property type="entry name" value="crcB"/>
    <property type="match status" value="1"/>
</dbReference>
<dbReference type="NCBIfam" id="NF010792">
    <property type="entry name" value="PRK14196.1"/>
    <property type="match status" value="1"/>
</dbReference>
<dbReference type="PANTHER" id="PTHR28259">
    <property type="entry name" value="FLUORIDE EXPORT PROTEIN 1-RELATED"/>
    <property type="match status" value="1"/>
</dbReference>
<dbReference type="PANTHER" id="PTHR28259:SF1">
    <property type="entry name" value="FLUORIDE EXPORT PROTEIN 1-RELATED"/>
    <property type="match status" value="1"/>
</dbReference>
<dbReference type="Pfam" id="PF02537">
    <property type="entry name" value="CRCB"/>
    <property type="match status" value="1"/>
</dbReference>
<accession>B7I4B4</accession>
<feature type="chain" id="PRO_1000189700" description="Fluoride-specific ion channel FluC">
    <location>
        <begin position="1"/>
        <end position="126"/>
    </location>
</feature>
<feature type="transmembrane region" description="Helical" evidence="1">
    <location>
        <begin position="4"/>
        <end position="24"/>
    </location>
</feature>
<feature type="transmembrane region" description="Helical" evidence="1">
    <location>
        <begin position="33"/>
        <end position="53"/>
    </location>
</feature>
<feature type="transmembrane region" description="Helical" evidence="1">
    <location>
        <begin position="67"/>
        <end position="87"/>
    </location>
</feature>
<feature type="transmembrane region" description="Helical" evidence="1">
    <location>
        <begin position="97"/>
        <end position="117"/>
    </location>
</feature>
<feature type="binding site" evidence="1">
    <location>
        <position position="74"/>
    </location>
    <ligand>
        <name>Na(+)</name>
        <dbReference type="ChEBI" id="CHEBI:29101"/>
        <note>structural</note>
    </ligand>
</feature>
<feature type="binding site" evidence="1">
    <location>
        <position position="77"/>
    </location>
    <ligand>
        <name>Na(+)</name>
        <dbReference type="ChEBI" id="CHEBI:29101"/>
        <note>structural</note>
    </ligand>
</feature>